<organism>
    <name type="scientific">Halothermothrix orenii (strain H 168 / OCM 544 / DSM 9562)</name>
    <dbReference type="NCBI Taxonomy" id="373903"/>
    <lineage>
        <taxon>Bacteria</taxon>
        <taxon>Bacillati</taxon>
        <taxon>Bacillota</taxon>
        <taxon>Clostridia</taxon>
        <taxon>Halanaerobiales</taxon>
        <taxon>Halothermotrichaceae</taxon>
        <taxon>Halothermothrix</taxon>
    </lineage>
</organism>
<keyword id="KW-1185">Reference proteome</keyword>
<keyword id="KW-0694">RNA-binding</keyword>
<keyword id="KW-0804">Transcription</keyword>
<keyword id="KW-0889">Transcription antitermination</keyword>
<keyword id="KW-0805">Transcription regulation</keyword>
<gene>
    <name evidence="1" type="primary">nusB</name>
    <name type="ordered locus">Hore_06300</name>
</gene>
<name>NUSB_HALOH</name>
<accession>B8D2G0</accession>
<feature type="chain" id="PRO_1000202482" description="Transcription antitermination protein NusB">
    <location>
        <begin position="1"/>
        <end position="134"/>
    </location>
</feature>
<reference key="1">
    <citation type="journal article" date="2009" name="PLoS ONE">
        <title>Genome analysis of the anaerobic thermohalophilic bacterium Halothermothrix orenii.</title>
        <authorList>
            <person name="Mavromatis K."/>
            <person name="Ivanova N."/>
            <person name="Anderson I."/>
            <person name="Lykidis A."/>
            <person name="Hooper S.D."/>
            <person name="Sun H."/>
            <person name="Kunin V."/>
            <person name="Lapidus A."/>
            <person name="Hugenholtz P."/>
            <person name="Patel B."/>
            <person name="Kyrpides N.C."/>
        </authorList>
    </citation>
    <scope>NUCLEOTIDE SEQUENCE [LARGE SCALE GENOMIC DNA]</scope>
    <source>
        <strain>H 168 / OCM 544 / DSM 9562</strain>
    </source>
</reference>
<evidence type="ECO:0000255" key="1">
    <source>
        <dbReference type="HAMAP-Rule" id="MF_00073"/>
    </source>
</evidence>
<dbReference type="EMBL" id="CP001098">
    <property type="protein sequence ID" value="ACL69387.1"/>
    <property type="molecule type" value="Genomic_DNA"/>
</dbReference>
<dbReference type="RefSeq" id="WP_012635575.1">
    <property type="nucleotide sequence ID" value="NC_011899.1"/>
</dbReference>
<dbReference type="SMR" id="B8D2G0"/>
<dbReference type="STRING" id="373903.Hore_06300"/>
<dbReference type="KEGG" id="hor:Hore_06300"/>
<dbReference type="eggNOG" id="COG0781">
    <property type="taxonomic scope" value="Bacteria"/>
</dbReference>
<dbReference type="HOGENOM" id="CLU_087843_3_3_9"/>
<dbReference type="OrthoDB" id="9811381at2"/>
<dbReference type="Proteomes" id="UP000000719">
    <property type="component" value="Chromosome"/>
</dbReference>
<dbReference type="GO" id="GO:0005829">
    <property type="term" value="C:cytosol"/>
    <property type="evidence" value="ECO:0007669"/>
    <property type="project" value="TreeGrafter"/>
</dbReference>
<dbReference type="GO" id="GO:0003723">
    <property type="term" value="F:RNA binding"/>
    <property type="evidence" value="ECO:0007669"/>
    <property type="project" value="UniProtKB-UniRule"/>
</dbReference>
<dbReference type="GO" id="GO:0006353">
    <property type="term" value="P:DNA-templated transcription termination"/>
    <property type="evidence" value="ECO:0007669"/>
    <property type="project" value="UniProtKB-UniRule"/>
</dbReference>
<dbReference type="GO" id="GO:0031564">
    <property type="term" value="P:transcription antitermination"/>
    <property type="evidence" value="ECO:0007669"/>
    <property type="project" value="UniProtKB-KW"/>
</dbReference>
<dbReference type="Gene3D" id="1.10.940.10">
    <property type="entry name" value="NusB-like"/>
    <property type="match status" value="1"/>
</dbReference>
<dbReference type="HAMAP" id="MF_00073">
    <property type="entry name" value="NusB"/>
    <property type="match status" value="1"/>
</dbReference>
<dbReference type="InterPro" id="IPR035926">
    <property type="entry name" value="NusB-like_sf"/>
</dbReference>
<dbReference type="InterPro" id="IPR011605">
    <property type="entry name" value="NusB_fam"/>
</dbReference>
<dbReference type="InterPro" id="IPR006027">
    <property type="entry name" value="NusB_RsmB_TIM44"/>
</dbReference>
<dbReference type="NCBIfam" id="TIGR01951">
    <property type="entry name" value="nusB"/>
    <property type="match status" value="1"/>
</dbReference>
<dbReference type="PANTHER" id="PTHR11078:SF3">
    <property type="entry name" value="ANTITERMINATION NUSB DOMAIN-CONTAINING PROTEIN"/>
    <property type="match status" value="1"/>
</dbReference>
<dbReference type="PANTHER" id="PTHR11078">
    <property type="entry name" value="N UTILIZATION SUBSTANCE PROTEIN B-RELATED"/>
    <property type="match status" value="1"/>
</dbReference>
<dbReference type="Pfam" id="PF01029">
    <property type="entry name" value="NusB"/>
    <property type="match status" value="1"/>
</dbReference>
<dbReference type="SUPFAM" id="SSF48013">
    <property type="entry name" value="NusB-like"/>
    <property type="match status" value="1"/>
</dbReference>
<sequence>MKITRHQERVWALQILYSLDISSELNIQKARKTCREFKYKKVLDKKRYYFEDIVEGVINSRQDLDSIINKYAIDWDVERMACIDRNILRIALYEIESGLPVGVAIDEAVEIAKDFGDSNSPKFINGILAKSIED</sequence>
<protein>
    <recommendedName>
        <fullName evidence="1">Transcription antitermination protein NusB</fullName>
    </recommendedName>
    <alternativeName>
        <fullName evidence="1">Antitermination factor NusB</fullName>
    </alternativeName>
</protein>
<comment type="function">
    <text evidence="1">Involved in transcription antitermination. Required for transcription of ribosomal RNA (rRNA) genes. Binds specifically to the boxA antiterminator sequence of the ribosomal RNA (rrn) operons.</text>
</comment>
<comment type="similarity">
    <text evidence="1">Belongs to the NusB family.</text>
</comment>
<proteinExistence type="inferred from homology"/>